<evidence type="ECO:0000250" key="1">
    <source>
        <dbReference type="UniProtKB" id="P00918"/>
    </source>
</evidence>
<evidence type="ECO:0000250" key="2">
    <source>
        <dbReference type="UniProtKB" id="P07450"/>
    </source>
</evidence>
<evidence type="ECO:0000250" key="3">
    <source>
        <dbReference type="UniProtKB" id="P07451"/>
    </source>
</evidence>
<evidence type="ECO:0000250" key="4">
    <source>
        <dbReference type="UniProtKB" id="P14141"/>
    </source>
</evidence>
<evidence type="ECO:0000255" key="5">
    <source>
        <dbReference type="PROSITE-ProRule" id="PRU01134"/>
    </source>
</evidence>
<evidence type="ECO:0000305" key="6"/>
<name>CAH3_BOVIN</name>
<proteinExistence type="evidence at transcript level"/>
<dbReference type="EC" id="4.2.1.1" evidence="3"/>
<dbReference type="EMBL" id="BC102666">
    <property type="protein sequence ID" value="AAI02667.1"/>
    <property type="molecule type" value="mRNA"/>
</dbReference>
<dbReference type="RefSeq" id="NP_001029609.1">
    <property type="nucleotide sequence ID" value="NM_001034437.1"/>
</dbReference>
<dbReference type="SMR" id="Q3SZX4"/>
<dbReference type="FunCoup" id="Q3SZX4">
    <property type="interactions" value="256"/>
</dbReference>
<dbReference type="STRING" id="9913.ENSBTAP00000020243"/>
<dbReference type="BindingDB" id="Q3SZX4"/>
<dbReference type="ChEMBL" id="CHEMBL1944498"/>
<dbReference type="DrugCentral" id="Q3SZX4"/>
<dbReference type="PaxDb" id="9913-ENSBTAP00000020243"/>
<dbReference type="PeptideAtlas" id="Q3SZX4"/>
<dbReference type="Ensembl" id="ENSBTAT00000020243.3">
    <property type="protein sequence ID" value="ENSBTAP00000020243.2"/>
    <property type="gene ID" value="ENSBTAG00000015214.4"/>
</dbReference>
<dbReference type="GeneID" id="513212"/>
<dbReference type="KEGG" id="bta:513212"/>
<dbReference type="CTD" id="761"/>
<dbReference type="VEuPathDB" id="HostDB:ENSBTAG00000015214"/>
<dbReference type="VGNC" id="VGNC:26653">
    <property type="gene designation" value="CA3"/>
</dbReference>
<dbReference type="eggNOG" id="KOG0382">
    <property type="taxonomic scope" value="Eukaryota"/>
</dbReference>
<dbReference type="GeneTree" id="ENSGT00940000159435"/>
<dbReference type="HOGENOM" id="CLU_039326_2_1_1"/>
<dbReference type="InParanoid" id="Q3SZX4"/>
<dbReference type="OMA" id="NYPMAKG"/>
<dbReference type="OrthoDB" id="429145at2759"/>
<dbReference type="TreeFam" id="TF316425"/>
<dbReference type="Reactome" id="R-BTA-1475029">
    <property type="pathway name" value="Reversible hydration of carbon dioxide"/>
</dbReference>
<dbReference type="PRO" id="PR:Q3SZX4"/>
<dbReference type="Proteomes" id="UP000009136">
    <property type="component" value="Chromosome 14"/>
</dbReference>
<dbReference type="Bgee" id="ENSBTAG00000015214">
    <property type="expression patterns" value="Expressed in gluteus medius and 95 other cell types or tissues"/>
</dbReference>
<dbReference type="GO" id="GO:0005737">
    <property type="term" value="C:cytoplasm"/>
    <property type="evidence" value="ECO:0000318"/>
    <property type="project" value="GO_Central"/>
</dbReference>
<dbReference type="GO" id="GO:0005829">
    <property type="term" value="C:cytosol"/>
    <property type="evidence" value="ECO:0000318"/>
    <property type="project" value="GO_Central"/>
</dbReference>
<dbReference type="GO" id="GO:0004089">
    <property type="term" value="F:carbonate dehydratase activity"/>
    <property type="evidence" value="ECO:0000318"/>
    <property type="project" value="GO_Central"/>
</dbReference>
<dbReference type="GO" id="GO:0008270">
    <property type="term" value="F:zinc ion binding"/>
    <property type="evidence" value="ECO:0007669"/>
    <property type="project" value="InterPro"/>
</dbReference>
<dbReference type="CDD" id="cd03119">
    <property type="entry name" value="alpha_CA_I_II_III_XIII"/>
    <property type="match status" value="1"/>
</dbReference>
<dbReference type="FunFam" id="3.10.200.10:FF:000001">
    <property type="entry name" value="Carbonic anhydrase 2"/>
    <property type="match status" value="1"/>
</dbReference>
<dbReference type="Gene3D" id="3.10.200.10">
    <property type="entry name" value="Alpha carbonic anhydrase"/>
    <property type="match status" value="1"/>
</dbReference>
<dbReference type="InterPro" id="IPR001148">
    <property type="entry name" value="CA_dom"/>
</dbReference>
<dbReference type="InterPro" id="IPR036398">
    <property type="entry name" value="CA_dom_sf"/>
</dbReference>
<dbReference type="InterPro" id="IPR023561">
    <property type="entry name" value="Carbonic_anhydrase_a-class"/>
</dbReference>
<dbReference type="InterPro" id="IPR018338">
    <property type="entry name" value="Carbonic_anhydrase_a-class_CS"/>
</dbReference>
<dbReference type="PANTHER" id="PTHR18952">
    <property type="entry name" value="CARBONIC ANHYDRASE"/>
    <property type="match status" value="1"/>
</dbReference>
<dbReference type="PANTHER" id="PTHR18952:SF127">
    <property type="entry name" value="CARBONIC ANHYDRASE 3"/>
    <property type="match status" value="1"/>
</dbReference>
<dbReference type="Pfam" id="PF00194">
    <property type="entry name" value="Carb_anhydrase"/>
    <property type="match status" value="1"/>
</dbReference>
<dbReference type="SMART" id="SM01057">
    <property type="entry name" value="Carb_anhydrase"/>
    <property type="match status" value="1"/>
</dbReference>
<dbReference type="SUPFAM" id="SSF51069">
    <property type="entry name" value="Carbonic anhydrase"/>
    <property type="match status" value="1"/>
</dbReference>
<dbReference type="PROSITE" id="PS00162">
    <property type="entry name" value="ALPHA_CA_1"/>
    <property type="match status" value="1"/>
</dbReference>
<dbReference type="PROSITE" id="PS51144">
    <property type="entry name" value="ALPHA_CA_2"/>
    <property type="match status" value="1"/>
</dbReference>
<protein>
    <recommendedName>
        <fullName>Carbonic anhydrase 3</fullName>
        <ecNumber evidence="3">4.2.1.1</ecNumber>
    </recommendedName>
    <alternativeName>
        <fullName>Carbonate dehydratase III</fullName>
    </alternativeName>
    <alternativeName>
        <fullName>Carbonic anhydrase III</fullName>
        <shortName>CA-III</shortName>
    </alternativeName>
</protein>
<organism>
    <name type="scientific">Bos taurus</name>
    <name type="common">Bovine</name>
    <dbReference type="NCBI Taxonomy" id="9913"/>
    <lineage>
        <taxon>Eukaryota</taxon>
        <taxon>Metazoa</taxon>
        <taxon>Chordata</taxon>
        <taxon>Craniata</taxon>
        <taxon>Vertebrata</taxon>
        <taxon>Euteleostomi</taxon>
        <taxon>Mammalia</taxon>
        <taxon>Eutheria</taxon>
        <taxon>Laurasiatheria</taxon>
        <taxon>Artiodactyla</taxon>
        <taxon>Ruminantia</taxon>
        <taxon>Pecora</taxon>
        <taxon>Bovidae</taxon>
        <taxon>Bovinae</taxon>
        <taxon>Bos</taxon>
    </lineage>
</organism>
<comment type="function">
    <text evidence="3">Reversible hydration of carbon dioxide.</text>
</comment>
<comment type="catalytic activity">
    <reaction evidence="3">
        <text>hydrogencarbonate + H(+) = CO2 + H2O</text>
        <dbReference type="Rhea" id="RHEA:10748"/>
        <dbReference type="ChEBI" id="CHEBI:15377"/>
        <dbReference type="ChEBI" id="CHEBI:15378"/>
        <dbReference type="ChEBI" id="CHEBI:16526"/>
        <dbReference type="ChEBI" id="CHEBI:17544"/>
        <dbReference type="EC" id="4.2.1.1"/>
    </reaction>
</comment>
<comment type="cofactor">
    <cofactor evidence="3">
        <name>Zn(2+)</name>
        <dbReference type="ChEBI" id="CHEBI:29105"/>
    </cofactor>
</comment>
<comment type="activity regulation">
    <text evidence="3">Inhibited by acetazolamide.</text>
</comment>
<comment type="subcellular location">
    <subcellularLocation>
        <location evidence="3">Cytoplasm</location>
    </subcellularLocation>
</comment>
<comment type="PTM">
    <text evidence="4">S-thiolated both by thiol-disulfide exchange with glutathione disulfide and by oxyradical-initiated S-thiolation with reduced glutathione.</text>
</comment>
<comment type="PTM">
    <text evidence="4">S-glutathionylated in hepatocytes under oxidative stress.</text>
</comment>
<comment type="similarity">
    <text evidence="6">Belongs to the alpha-carbonic anhydrase family.</text>
</comment>
<reference key="1">
    <citation type="submission" date="2005-08" db="EMBL/GenBank/DDBJ databases">
        <authorList>
            <consortium name="NIH - Mammalian Gene Collection (MGC) project"/>
        </authorList>
    </citation>
    <scope>NUCLEOTIDE SEQUENCE [LARGE SCALE MRNA]</scope>
    <source>
        <strain>Crossbred X Angus</strain>
        <tissue>Liver</tissue>
    </source>
</reference>
<gene>
    <name type="primary">CA3</name>
</gene>
<accession>Q3SZX4</accession>
<keyword id="KW-0007">Acetylation</keyword>
<keyword id="KW-0963">Cytoplasm</keyword>
<keyword id="KW-0318">Glutathionylation</keyword>
<keyword id="KW-0456">Lyase</keyword>
<keyword id="KW-0479">Metal-binding</keyword>
<keyword id="KW-0597">Phosphoprotein</keyword>
<keyword id="KW-1185">Reference proteome</keyword>
<keyword id="KW-0862">Zinc</keyword>
<sequence>MAKEWGYADHNGPDHWHELFPNAKGENQSPIELNTKEISHDPSLKPWTASYDPGSAKTILNNGKTCRVVFDDTYDRSMLRGGPLAAPYRLRQFHLHWGSSDDHGSEHSVDGVKYAAELHLVHWNSKYNSYATALKHADGIAVVGVFLKIGREKGEFQLLLDALDKIKTKGKEAPFNNFNPSCLFPACRDYWTYHGSFTTPPCEECIVWLLLKEPITVSSDQIAKLRTLYSSAENEPPVPLVRNWRPPQPIKGRIVKASFK</sequence>
<feature type="initiator methionine" description="Removed" evidence="2">
    <location>
        <position position="1"/>
    </location>
</feature>
<feature type="chain" id="PRO_0000262533" description="Carbonic anhydrase 3">
    <location>
        <begin position="2"/>
        <end position="260"/>
    </location>
</feature>
<feature type="domain" description="Alpha-carbonic anhydrase" evidence="5">
    <location>
        <begin position="3"/>
        <end position="259"/>
    </location>
</feature>
<feature type="region of interest" description="Involved in proton transfer" evidence="3">
    <location>
        <begin position="64"/>
        <end position="67"/>
    </location>
</feature>
<feature type="binding site" evidence="1">
    <location>
        <position position="94"/>
    </location>
    <ligand>
        <name>Zn(2+)</name>
        <dbReference type="ChEBI" id="CHEBI:29105"/>
        <note>catalytic</note>
    </ligand>
</feature>
<feature type="binding site" evidence="1">
    <location>
        <position position="96"/>
    </location>
    <ligand>
        <name>Zn(2+)</name>
        <dbReference type="ChEBI" id="CHEBI:29105"/>
        <note>catalytic</note>
    </ligand>
</feature>
<feature type="binding site" evidence="1">
    <location>
        <position position="119"/>
    </location>
    <ligand>
        <name>Zn(2+)</name>
        <dbReference type="ChEBI" id="CHEBI:29105"/>
        <note>catalytic</note>
    </ligand>
</feature>
<feature type="binding site" evidence="1">
    <location>
        <begin position="198"/>
        <end position="199"/>
    </location>
    <ligand>
        <name>substrate</name>
    </ligand>
</feature>
<feature type="modified residue" description="N-acetylalanine" evidence="2">
    <location>
        <position position="2"/>
    </location>
</feature>
<feature type="modified residue" description="Phosphoserine" evidence="4">
    <location>
        <position position="29"/>
    </location>
</feature>
<feature type="modified residue" description="Phosphoserine" evidence="4">
    <location>
        <position position="43"/>
    </location>
</feature>
<feature type="modified residue" description="Phosphoserine" evidence="4">
    <location>
        <position position="50"/>
    </location>
</feature>
<feature type="modified residue" description="Phosphoserine" evidence="4">
    <location>
        <position position="55"/>
    </location>
</feature>
<feature type="modified residue" description="Phosphothreonine" evidence="4">
    <location>
        <position position="73"/>
    </location>
</feature>
<feature type="modified residue" description="Phosphotyrosine" evidence="4">
    <location>
        <position position="127"/>
    </location>
</feature>
<feature type="modified residue" description="S-glutathionyl cysteine" evidence="4">
    <location>
        <position position="182"/>
    </location>
</feature>
<feature type="modified residue" description="S-glutathionyl cysteine" evidence="4">
    <location>
        <position position="187"/>
    </location>
</feature>
<feature type="modified residue" description="Phosphothreonine" evidence="4">
    <location>
        <position position="216"/>
    </location>
</feature>
<feature type="modified residue" description="Phosphoserine" evidence="4">
    <location>
        <position position="219"/>
    </location>
</feature>